<keyword id="KW-0046">Antibiotic resistance</keyword>
<keyword id="KW-1003">Cell membrane</keyword>
<keyword id="KW-0133">Cell shape</keyword>
<keyword id="KW-0961">Cell wall biogenesis/degradation</keyword>
<keyword id="KW-0378">Hydrolase</keyword>
<keyword id="KW-0472">Membrane</keyword>
<keyword id="KW-0573">Peptidoglycan synthesis</keyword>
<keyword id="KW-0812">Transmembrane</keyword>
<keyword id="KW-1133">Transmembrane helix</keyword>
<protein>
    <recommendedName>
        <fullName>Undecaprenyl-diphosphatase</fullName>
        <ecNumber>3.6.1.27</ecNumber>
    </recommendedName>
    <alternativeName>
        <fullName>Bacitracin resistance protein</fullName>
    </alternativeName>
    <alternativeName>
        <fullName>Undecaprenyl pyrophosphate phosphatase</fullName>
    </alternativeName>
</protein>
<organism>
    <name type="scientific">Staphylococcus aureus</name>
    <dbReference type="NCBI Taxonomy" id="1280"/>
    <lineage>
        <taxon>Bacteria</taxon>
        <taxon>Bacillati</taxon>
        <taxon>Bacillota</taxon>
        <taxon>Bacilli</taxon>
        <taxon>Bacillales</taxon>
        <taxon>Staphylococcaceae</taxon>
        <taxon>Staphylococcus</taxon>
    </lineage>
</organism>
<feature type="chain" id="PRO_0000151203" description="Undecaprenyl-diphosphatase">
    <location>
        <begin position="1"/>
        <end position="291"/>
    </location>
</feature>
<feature type="transmembrane region" description="Helical" evidence="2">
    <location>
        <begin position="1"/>
        <end position="21"/>
    </location>
</feature>
<feature type="transmembrane region" description="Helical" evidence="2">
    <location>
        <begin position="48"/>
        <end position="68"/>
    </location>
</feature>
<feature type="transmembrane region" description="Helical" evidence="2">
    <location>
        <begin position="102"/>
        <end position="122"/>
    </location>
</feature>
<feature type="transmembrane region" description="Helical" evidence="2">
    <location>
        <begin position="126"/>
        <end position="146"/>
    </location>
</feature>
<feature type="transmembrane region" description="Helical" evidence="2">
    <location>
        <begin position="162"/>
        <end position="182"/>
    </location>
</feature>
<feature type="transmembrane region" description="Helical" evidence="2">
    <location>
        <begin position="203"/>
        <end position="223"/>
    </location>
</feature>
<feature type="transmembrane region" description="Helical" evidence="2">
    <location>
        <begin position="231"/>
        <end position="251"/>
    </location>
</feature>
<feature type="transmembrane region" description="Helical" evidence="2">
    <location>
        <begin position="267"/>
        <end position="287"/>
    </location>
</feature>
<gene>
    <name type="primary">uppP</name>
    <name type="synonym">bacA</name>
    <name type="synonym">upk</name>
</gene>
<accession>Q9KIN5</accession>
<reference key="1">
    <citation type="journal article" date="2000" name="Microbiology">
        <title>The bacA gene, which determines bacitracin susceptibility in Streptococcus pneumoniae and Staphylococcus aureus, is also required for virulence.</title>
        <authorList>
            <person name="Chalker A.F."/>
            <person name="Ingraham K.A."/>
            <person name="Lunsford R.D."/>
            <person name="Bryant A.P."/>
            <person name="Bryant J."/>
            <person name="Wallis N.G."/>
            <person name="Broskey J.P."/>
            <person name="Pearson S.C."/>
            <person name="Holmes D.J."/>
        </authorList>
    </citation>
    <scope>NUCLEOTIDE SEQUENCE [GENOMIC DNA]</scope>
    <source>
        <strain>WCUH29 / NCIMB 40771</strain>
    </source>
</reference>
<dbReference type="EC" id="3.6.1.27"/>
<dbReference type="EMBL" id="AF228662">
    <property type="protein sequence ID" value="AAF81096.1"/>
    <property type="molecule type" value="Genomic_DNA"/>
</dbReference>
<dbReference type="SMR" id="Q9KIN5"/>
<dbReference type="GO" id="GO:0005886">
    <property type="term" value="C:plasma membrane"/>
    <property type="evidence" value="ECO:0007669"/>
    <property type="project" value="UniProtKB-SubCell"/>
</dbReference>
<dbReference type="GO" id="GO:0050380">
    <property type="term" value="F:undecaprenyl-diphosphatase activity"/>
    <property type="evidence" value="ECO:0007669"/>
    <property type="project" value="UniProtKB-UniRule"/>
</dbReference>
<dbReference type="GO" id="GO:0071555">
    <property type="term" value="P:cell wall organization"/>
    <property type="evidence" value="ECO:0007669"/>
    <property type="project" value="UniProtKB-KW"/>
</dbReference>
<dbReference type="GO" id="GO:0009252">
    <property type="term" value="P:peptidoglycan biosynthetic process"/>
    <property type="evidence" value="ECO:0007669"/>
    <property type="project" value="UniProtKB-KW"/>
</dbReference>
<dbReference type="GO" id="GO:0008360">
    <property type="term" value="P:regulation of cell shape"/>
    <property type="evidence" value="ECO:0007669"/>
    <property type="project" value="UniProtKB-KW"/>
</dbReference>
<dbReference type="GO" id="GO:0046677">
    <property type="term" value="P:response to antibiotic"/>
    <property type="evidence" value="ECO:0007669"/>
    <property type="project" value="UniProtKB-UniRule"/>
</dbReference>
<dbReference type="HAMAP" id="MF_01006">
    <property type="entry name" value="Undec_diphosphatase"/>
    <property type="match status" value="1"/>
</dbReference>
<dbReference type="InterPro" id="IPR003824">
    <property type="entry name" value="UppP"/>
</dbReference>
<dbReference type="NCBIfam" id="NF001390">
    <property type="entry name" value="PRK00281.1-4"/>
    <property type="match status" value="1"/>
</dbReference>
<dbReference type="NCBIfam" id="TIGR00753">
    <property type="entry name" value="undec_PP_bacA"/>
    <property type="match status" value="1"/>
</dbReference>
<dbReference type="PANTHER" id="PTHR30622">
    <property type="entry name" value="UNDECAPRENYL-DIPHOSPHATASE"/>
    <property type="match status" value="1"/>
</dbReference>
<dbReference type="PANTHER" id="PTHR30622:SF3">
    <property type="entry name" value="UNDECAPRENYL-DIPHOSPHATASE"/>
    <property type="match status" value="1"/>
</dbReference>
<dbReference type="Pfam" id="PF02673">
    <property type="entry name" value="BacA"/>
    <property type="match status" value="1"/>
</dbReference>
<name>UPPP_STAAU</name>
<evidence type="ECO:0000250" key="1"/>
<evidence type="ECO:0000255" key="2"/>
<evidence type="ECO:0000305" key="3"/>
<sequence length="291" mass="32313">MFIIELIKGIILGVVEGLTEFAPVSSTGHMILVDDMWLKSSEFLGSQSAFTFKIVIQLGSVFAAAWVFRERFLEILHIGKHKHVEGENDQQRRSKPRRLNLLHVLVGMVPAGILGLLFDDFIEEHLFSVPTVMIGLFVGAIYMIIADKYSVKVKNPQTVDQINYFQAFVIGISQAVAMWPGFSRSGSTISTGVLMKLNHKAASDFTFIMAVPIMLAASGLSLLKHYQDIQIADIPFYILGFLAAFTVGLIAIKTFLHLSNKIKLIPFAIYRIVLVIFIAILYFGFGIGKGI</sequence>
<proteinExistence type="inferred from homology"/>
<comment type="function">
    <text evidence="1">Catalyzes the dephosphorylation of undecaprenyl diphosphate (UPP) (By similarity). Confers resistance to bacitracin. Is also required for virulence.</text>
</comment>
<comment type="catalytic activity">
    <reaction>
        <text>di-trans,octa-cis-undecaprenyl diphosphate + H2O = di-trans,octa-cis-undecaprenyl phosphate + phosphate + H(+)</text>
        <dbReference type="Rhea" id="RHEA:28094"/>
        <dbReference type="ChEBI" id="CHEBI:15377"/>
        <dbReference type="ChEBI" id="CHEBI:15378"/>
        <dbReference type="ChEBI" id="CHEBI:43474"/>
        <dbReference type="ChEBI" id="CHEBI:58405"/>
        <dbReference type="ChEBI" id="CHEBI:60392"/>
        <dbReference type="EC" id="3.6.1.27"/>
    </reaction>
</comment>
<comment type="subcellular location">
    <subcellularLocation>
        <location evidence="1">Cell membrane</location>
        <topology evidence="1">Multi-pass membrane protein</topology>
    </subcellularLocation>
</comment>
<comment type="miscellaneous">
    <text>Bacitracin is thought to be involved in the inhibition of peptidoglycan synthesis by sequestering undecaprenyl diphosphate, thereby reducing the pool of lipid carrier available.</text>
</comment>
<comment type="similarity">
    <text evidence="3">Belongs to the UppP family.</text>
</comment>